<organism>
    <name type="scientific">Saccharomyces cerevisiae (strain ATCC 204508 / S288c)</name>
    <name type="common">Baker's yeast</name>
    <dbReference type="NCBI Taxonomy" id="559292"/>
    <lineage>
        <taxon>Eukaryota</taxon>
        <taxon>Fungi</taxon>
        <taxon>Dikarya</taxon>
        <taxon>Ascomycota</taxon>
        <taxon>Saccharomycotina</taxon>
        <taxon>Saccharomycetes</taxon>
        <taxon>Saccharomycetales</taxon>
        <taxon>Saccharomycetaceae</taxon>
        <taxon>Saccharomyces</taxon>
    </lineage>
</organism>
<dbReference type="EMBL" id="Z49259">
    <property type="protein sequence ID" value="CAA89235.1"/>
    <property type="molecule type" value="Genomic_DNA"/>
</dbReference>
<dbReference type="EMBL" id="BK006946">
    <property type="protein sequence ID" value="DAA09985.1"/>
    <property type="molecule type" value="Genomic_DNA"/>
</dbReference>
<dbReference type="PIR" id="S54464">
    <property type="entry name" value="S54464"/>
</dbReference>
<dbReference type="RefSeq" id="NP_013806.1">
    <property type="nucleotide sequence ID" value="NM_001182588.1"/>
</dbReference>
<dbReference type="BioGRID" id="35263">
    <property type="interactions" value="102"/>
</dbReference>
<dbReference type="DIP" id="DIP-888N"/>
<dbReference type="FunCoup" id="Q04301">
    <property type="interactions" value="36"/>
</dbReference>
<dbReference type="STRING" id="4932.YMR088C"/>
<dbReference type="TCDB" id="2.A.1.48.1">
    <property type="family name" value="the major facilitator superfamily (mfs)"/>
</dbReference>
<dbReference type="GlyCosmos" id="Q04301">
    <property type="glycosylation" value="3 sites, No reported glycans"/>
</dbReference>
<dbReference type="GlyGen" id="Q04301">
    <property type="glycosylation" value="3 sites"/>
</dbReference>
<dbReference type="iPTMnet" id="Q04301"/>
<dbReference type="PaxDb" id="4932-YMR088C"/>
<dbReference type="PeptideAtlas" id="Q04301"/>
<dbReference type="EnsemblFungi" id="YMR088C_mRNA">
    <property type="protein sequence ID" value="YMR088C"/>
    <property type="gene ID" value="YMR088C"/>
</dbReference>
<dbReference type="GeneID" id="855113"/>
<dbReference type="KEGG" id="sce:YMR088C"/>
<dbReference type="AGR" id="SGD:S000004694"/>
<dbReference type="SGD" id="S000004694">
    <property type="gene designation" value="VBA1"/>
</dbReference>
<dbReference type="VEuPathDB" id="FungiDB:YMR088C"/>
<dbReference type="eggNOG" id="KOG0254">
    <property type="taxonomic scope" value="Eukaryota"/>
</dbReference>
<dbReference type="HOGENOM" id="CLU_000960_22_3_1"/>
<dbReference type="InParanoid" id="Q04301"/>
<dbReference type="OMA" id="FYLWRSI"/>
<dbReference type="OrthoDB" id="10021397at2759"/>
<dbReference type="BioCyc" id="YEAST:G3O-32788-MONOMER"/>
<dbReference type="BioGRID-ORCS" id="855113">
    <property type="hits" value="0 hits in 10 CRISPR screens"/>
</dbReference>
<dbReference type="PRO" id="PR:Q04301"/>
<dbReference type="Proteomes" id="UP000002311">
    <property type="component" value="Chromosome XIII"/>
</dbReference>
<dbReference type="RNAct" id="Q04301">
    <property type="molecule type" value="protein"/>
</dbReference>
<dbReference type="GO" id="GO:0000329">
    <property type="term" value="C:fungal-type vacuole membrane"/>
    <property type="evidence" value="ECO:0000314"/>
    <property type="project" value="SGD"/>
</dbReference>
<dbReference type="GO" id="GO:0015174">
    <property type="term" value="F:basic amino acid transmembrane transporter activity"/>
    <property type="evidence" value="ECO:0000314"/>
    <property type="project" value="SGD"/>
</dbReference>
<dbReference type="GO" id="GO:0015802">
    <property type="term" value="P:basic amino acid transport"/>
    <property type="evidence" value="ECO:0000315"/>
    <property type="project" value="SGD"/>
</dbReference>
<dbReference type="GO" id="GO:0055085">
    <property type="term" value="P:transmembrane transport"/>
    <property type="evidence" value="ECO:0000318"/>
    <property type="project" value="GO_Central"/>
</dbReference>
<dbReference type="CDD" id="cd17502">
    <property type="entry name" value="MFS_Azr1_MDR_like"/>
    <property type="match status" value="1"/>
</dbReference>
<dbReference type="FunFam" id="1.20.1250.20:FF:000575">
    <property type="entry name" value="Vba1p"/>
    <property type="match status" value="1"/>
</dbReference>
<dbReference type="FunFam" id="1.20.1250.20:FF:000590">
    <property type="entry name" value="Vba1p"/>
    <property type="match status" value="1"/>
</dbReference>
<dbReference type="Gene3D" id="1.20.1250.20">
    <property type="entry name" value="MFS general substrate transporter like domains"/>
    <property type="match status" value="2"/>
</dbReference>
<dbReference type="InterPro" id="IPR011701">
    <property type="entry name" value="MFS"/>
</dbReference>
<dbReference type="InterPro" id="IPR020846">
    <property type="entry name" value="MFS_dom"/>
</dbReference>
<dbReference type="InterPro" id="IPR036259">
    <property type="entry name" value="MFS_trans_sf"/>
</dbReference>
<dbReference type="PANTHER" id="PTHR23501">
    <property type="entry name" value="MAJOR FACILITATOR SUPERFAMILY"/>
    <property type="match status" value="1"/>
</dbReference>
<dbReference type="PANTHER" id="PTHR23501:SF47">
    <property type="entry name" value="VACUOLAR BASIC AMINO ACID TRANSPORTER 1"/>
    <property type="match status" value="1"/>
</dbReference>
<dbReference type="Pfam" id="PF07690">
    <property type="entry name" value="MFS_1"/>
    <property type="match status" value="1"/>
</dbReference>
<dbReference type="SUPFAM" id="SSF103473">
    <property type="entry name" value="MFS general substrate transporter"/>
    <property type="match status" value="1"/>
</dbReference>
<dbReference type="PROSITE" id="PS50850">
    <property type="entry name" value="MFS"/>
    <property type="match status" value="1"/>
</dbReference>
<comment type="function">
    <text evidence="2">Transporter required for vacuolar uptake of at least histidine and lysine.</text>
</comment>
<comment type="subcellular location">
    <subcellularLocation>
        <location evidence="2">Vacuole membrane</location>
        <topology evidence="2">Multi-pass membrane protein</topology>
    </subcellularLocation>
</comment>
<comment type="similarity">
    <text evidence="3">Belongs to the major facilitator superfamily.</text>
</comment>
<keyword id="KW-0029">Amino-acid transport</keyword>
<keyword id="KW-0325">Glycoprotein</keyword>
<keyword id="KW-0472">Membrane</keyword>
<keyword id="KW-1185">Reference proteome</keyword>
<keyword id="KW-0812">Transmembrane</keyword>
<keyword id="KW-1133">Transmembrane helix</keyword>
<keyword id="KW-0813">Transport</keyword>
<keyword id="KW-0926">Vacuole</keyword>
<gene>
    <name type="primary">VBA1</name>
    <name type="ordered locus">YMR088C</name>
    <name type="ORF">YM9582.13C</name>
</gene>
<sequence length="562" mass="62640">MQTLDETSNLLPPPEEAEAPPLEQKFHEYNLALPKFPILFSLWLGSFLSSLDSTIVANIMNRVAEEFSESSKKQWIATSFLLTNTAFQPLYGKLSDITGRKSALLTAQFFFGLGCLLTCFARNVTEFSIARAICGIGAGGLNAISSIAVSDICTARERGVYQGYANIVFGFGQLLGAPLGGVFIETIGWRALFGIQVPVIMLCSVLAIKNINIKLFHVPPMKERYTLKNLSRIDIFGSLSLVATISGVLFLCSSQLNKLYLALFTIGSFIVFILVERYYATEKILPFELLTRSFCLSSAVTVISSFVVFGEIFRSPIYLQLLQNISVTKTGLFLIFPSISVAVGSLVTGWVLRNTKINLAHCAYQIIFGGMIMQLLGLGLGYFLLSHLNPDYTIYDMLESITFRSNSIWWKLIYVFASVLVSFGYACLLVATLVSIVFTVEKSQQGTMTGVFYLWRSIGNVLGASLTLVSYENSLSSMLWNYMFKTKRDDEYHFTKKQYYSLINDSSYLRGPNFPTDIFVRILDVYKKAFLISYIPNIALAAVGIVLSLYLVKHTYKRSSSS</sequence>
<evidence type="ECO:0000255" key="1"/>
<evidence type="ECO:0000269" key="2">
    <source>
    </source>
</evidence>
<evidence type="ECO:0000305" key="3"/>
<accession>Q04301</accession>
<accession>D6VZR1</accession>
<name>VBA1_YEAST</name>
<feature type="chain" id="PRO_0000173428" description="Vacuolar basic amino acid transporter 1">
    <location>
        <begin position="1"/>
        <end position="562"/>
    </location>
</feature>
<feature type="topological domain" description="Vacuolar" evidence="1">
    <location>
        <begin position="1"/>
        <end position="30"/>
    </location>
</feature>
<feature type="transmembrane region" description="Helical" evidence="1">
    <location>
        <begin position="31"/>
        <end position="51"/>
    </location>
</feature>
<feature type="topological domain" description="Cytoplasmic" evidence="1">
    <location>
        <begin position="52"/>
        <end position="100"/>
    </location>
</feature>
<feature type="transmembrane region" description="Helical" evidence="1">
    <location>
        <begin position="101"/>
        <end position="121"/>
    </location>
</feature>
<feature type="topological domain" description="Vacuolar" evidence="1">
    <location>
        <begin position="122"/>
        <end position="131"/>
    </location>
</feature>
<feature type="transmembrane region" description="Helical" evidence="1">
    <location>
        <begin position="132"/>
        <end position="152"/>
    </location>
</feature>
<feature type="topological domain" description="Cytoplasmic" evidence="1">
    <location>
        <begin position="153"/>
        <end position="166"/>
    </location>
</feature>
<feature type="transmembrane region" description="Helical" evidence="1">
    <location>
        <begin position="167"/>
        <end position="187"/>
    </location>
</feature>
<feature type="topological domain" description="Vacuolar" evidence="1">
    <location>
        <begin position="188"/>
        <end position="190"/>
    </location>
</feature>
<feature type="transmembrane region" description="Helical" evidence="1">
    <location>
        <begin position="191"/>
        <end position="211"/>
    </location>
</feature>
<feature type="topological domain" description="Cytoplasmic" evidence="1">
    <location>
        <begin position="212"/>
        <end position="232"/>
    </location>
</feature>
<feature type="transmembrane region" description="Helical" evidence="1">
    <location>
        <begin position="233"/>
        <end position="253"/>
    </location>
</feature>
<feature type="topological domain" description="Vacuolar" evidence="1">
    <location>
        <begin position="254"/>
        <end position="255"/>
    </location>
</feature>
<feature type="transmembrane region" description="Helical" evidence="1">
    <location>
        <begin position="256"/>
        <end position="276"/>
    </location>
</feature>
<feature type="topological domain" description="Cytoplasmic" evidence="1">
    <location>
        <begin position="277"/>
        <end position="292"/>
    </location>
</feature>
<feature type="transmembrane region" description="Helical" evidence="1">
    <location>
        <begin position="293"/>
        <end position="313"/>
    </location>
</feature>
<feature type="topological domain" description="Vacuolar" evidence="1">
    <location>
        <begin position="314"/>
        <end position="331"/>
    </location>
</feature>
<feature type="transmembrane region" description="Helical" evidence="1">
    <location>
        <begin position="332"/>
        <end position="352"/>
    </location>
</feature>
<feature type="topological domain" description="Cytoplasmic" evidence="1">
    <location>
        <begin position="353"/>
        <end position="365"/>
    </location>
</feature>
<feature type="transmembrane region" description="Helical" evidence="1">
    <location>
        <begin position="366"/>
        <end position="386"/>
    </location>
</feature>
<feature type="topological domain" description="Vacuolar" evidence="1">
    <location>
        <begin position="387"/>
        <end position="419"/>
    </location>
</feature>
<feature type="transmembrane region" description="Helical" evidence="1">
    <location>
        <begin position="420"/>
        <end position="440"/>
    </location>
</feature>
<feature type="topological domain" description="Cytoplasmic" evidence="1">
    <location>
        <begin position="441"/>
        <end position="448"/>
    </location>
</feature>
<feature type="transmembrane region" description="Helical" evidence="1">
    <location>
        <begin position="449"/>
        <end position="469"/>
    </location>
</feature>
<feature type="topological domain" description="Vacuolar" evidence="1">
    <location>
        <begin position="470"/>
        <end position="528"/>
    </location>
</feature>
<feature type="transmembrane region" description="Helical" evidence="1">
    <location>
        <begin position="529"/>
        <end position="549"/>
    </location>
</feature>
<feature type="topological domain" description="Cytoplasmic" evidence="1">
    <location>
        <begin position="550"/>
        <end position="562"/>
    </location>
</feature>
<feature type="glycosylation site" description="N-linked (GlcNAc...) asparagine" evidence="1">
    <location>
        <position position="123"/>
    </location>
</feature>
<feature type="glycosylation site" description="N-linked (GlcNAc...) asparagine" evidence="1">
    <location>
        <position position="324"/>
    </location>
</feature>
<feature type="glycosylation site" description="N-linked (GlcNAc...) asparagine" evidence="1">
    <location>
        <position position="504"/>
    </location>
</feature>
<reference key="1">
    <citation type="journal article" date="1997" name="Nature">
        <title>The nucleotide sequence of Saccharomyces cerevisiae chromosome XIII.</title>
        <authorList>
            <person name="Bowman S."/>
            <person name="Churcher C.M."/>
            <person name="Badcock K."/>
            <person name="Brown D."/>
            <person name="Chillingworth T."/>
            <person name="Connor R."/>
            <person name="Dedman K."/>
            <person name="Devlin K."/>
            <person name="Gentles S."/>
            <person name="Hamlin N."/>
            <person name="Hunt S."/>
            <person name="Jagels K."/>
            <person name="Lye G."/>
            <person name="Moule S."/>
            <person name="Odell C."/>
            <person name="Pearson D."/>
            <person name="Rajandream M.A."/>
            <person name="Rice P."/>
            <person name="Skelton J."/>
            <person name="Walsh S.V."/>
            <person name="Whitehead S."/>
            <person name="Barrell B.G."/>
        </authorList>
    </citation>
    <scope>NUCLEOTIDE SEQUENCE [LARGE SCALE GENOMIC DNA]</scope>
    <source>
        <strain>ATCC 204508 / S288c</strain>
    </source>
</reference>
<reference key="2">
    <citation type="journal article" date="2014" name="G3 (Bethesda)">
        <title>The reference genome sequence of Saccharomyces cerevisiae: Then and now.</title>
        <authorList>
            <person name="Engel S.R."/>
            <person name="Dietrich F.S."/>
            <person name="Fisk D.G."/>
            <person name="Binkley G."/>
            <person name="Balakrishnan R."/>
            <person name="Costanzo M.C."/>
            <person name="Dwight S.S."/>
            <person name="Hitz B.C."/>
            <person name="Karra K."/>
            <person name="Nash R.S."/>
            <person name="Weng S."/>
            <person name="Wong E.D."/>
            <person name="Lloyd P."/>
            <person name="Skrzypek M.S."/>
            <person name="Miyasato S.R."/>
            <person name="Simison M."/>
            <person name="Cherry J.M."/>
        </authorList>
    </citation>
    <scope>GENOME REANNOTATION</scope>
    <source>
        <strain>ATCC 204508 / S288c</strain>
    </source>
</reference>
<reference key="3">
    <citation type="journal article" date="2005" name="J. Biol. Chem.">
        <title>A family of basic amino acid transporters of the vacuolar membrane from Saccharomyces cerevisiae.</title>
        <authorList>
            <person name="Shimazu M."/>
            <person name="Sekito T."/>
            <person name="Akiyama K."/>
            <person name="Ohsumi Y."/>
            <person name="Kakinuma Y."/>
        </authorList>
    </citation>
    <scope>FUNCTION</scope>
    <scope>SUBCELLULAR LOCATION</scope>
</reference>
<reference key="4">
    <citation type="journal article" date="2006" name="Proc. Natl. Acad. Sci. U.S.A.">
        <title>A global topology map of the Saccharomyces cerevisiae membrane proteome.</title>
        <authorList>
            <person name="Kim H."/>
            <person name="Melen K."/>
            <person name="Oesterberg M."/>
            <person name="von Heijne G."/>
        </authorList>
    </citation>
    <scope>TOPOLOGY [LARGE SCALE ANALYSIS]</scope>
    <source>
        <strain>ATCC 208353 / W303-1A</strain>
    </source>
</reference>
<protein>
    <recommendedName>
        <fullName>Vacuolar basic amino acid transporter 1</fullName>
    </recommendedName>
</protein>
<proteinExistence type="evidence at protein level"/>